<organism>
    <name type="scientific">Pseudomonas fluorescens</name>
    <dbReference type="NCBI Taxonomy" id="294"/>
    <lineage>
        <taxon>Bacteria</taxon>
        <taxon>Pseudomonadati</taxon>
        <taxon>Pseudomonadota</taxon>
        <taxon>Gammaproteobacteria</taxon>
        <taxon>Pseudomonadales</taxon>
        <taxon>Pseudomonadaceae</taxon>
        <taxon>Pseudomonas</taxon>
    </lineage>
</organism>
<sequence>MTLKKDVAVDIDSTCFRQAVALFATGIAVLSAETEEGEVHGMTVNSFTSISLDPPTVMVSLKSGRMHELLTRGGRFGVSLLGESQKVFSAFFSKRVMDDTPSPAFTIQAGLPTLRDAMAWFECEVESTVQVHDHTLFIARVSACGTPEANAPQPLLFFASRYHGKPLPLN</sequence>
<keyword id="KW-0520">NAD</keyword>
<keyword id="KW-0560">Oxidoreductase</keyword>
<feature type="chain" id="PRO_0000430451" description="NADH-dependent flavin reductase StyB">
    <location>
        <begin position="1"/>
        <end position="170"/>
    </location>
</feature>
<proteinExistence type="inferred from homology"/>
<reference key="1">
    <citation type="journal article" date="1997" name="Appl. Environ. Microbiol.">
        <title>Sequencing and functional analysis of styrene catabolism genes from Pseudomonas fluorescens ST.</title>
        <authorList>
            <person name="Beltrametti F."/>
            <person name="Marconi A.M."/>
            <person name="Bestetti G."/>
            <person name="Colombo C."/>
            <person name="Galli E."/>
            <person name="Ruzzi M."/>
            <person name="Zennaro E."/>
        </authorList>
    </citation>
    <scope>NUCLEOTIDE SEQUENCE [GENOMIC DNA]</scope>
    <scope>FUNCTION</scope>
    <scope>PATHWAY</scope>
    <source>
        <strain>ST</strain>
    </source>
</reference>
<comment type="function">
    <text evidence="2">Reductase component of a two-component system that catalyzes the first step in the aerobic styrene degradation pathway by enantioselective epoxidation of the vinyl side chain. Utilizes NADH to reduce FAD, which is then transferred to the styrene monooxygenase StyA.</text>
</comment>
<comment type="catalytic activity">
    <reaction evidence="4">
        <text>a reduced flavin + NAD(+) = an oxidized flavin + NADH + 2 H(+)</text>
        <dbReference type="Rhea" id="RHEA:31303"/>
        <dbReference type="ChEBI" id="CHEBI:15378"/>
        <dbReference type="ChEBI" id="CHEBI:57540"/>
        <dbReference type="ChEBI" id="CHEBI:57945"/>
        <dbReference type="ChEBI" id="CHEBI:60531"/>
        <dbReference type="ChEBI" id="CHEBI:62787"/>
        <dbReference type="EC" id="1.5.1.36"/>
    </reaction>
</comment>
<comment type="pathway">
    <text evidence="2">Aromatic compound metabolism.</text>
</comment>
<comment type="subunit">
    <text evidence="1">Homodimer.</text>
</comment>
<comment type="similarity">
    <text evidence="3">Belongs to the non-flavoprotein flavin reductase family.</text>
</comment>
<dbReference type="EC" id="1.5.1.36" evidence="4"/>
<dbReference type="EMBL" id="Z92524">
    <property type="protein sequence ID" value="CAB06824.1"/>
    <property type="molecule type" value="Genomic_DNA"/>
</dbReference>
<dbReference type="RefSeq" id="WP_191834014.1">
    <property type="nucleotide sequence ID" value="NZ_CAIGJY010000049.1"/>
</dbReference>
<dbReference type="SMR" id="O06835"/>
<dbReference type="BioCyc" id="MetaCyc:MONOMER-16947"/>
<dbReference type="GO" id="GO:0036382">
    <property type="term" value="F:flavin reductase (NADH) activity"/>
    <property type="evidence" value="ECO:0000314"/>
    <property type="project" value="UniProtKB"/>
</dbReference>
<dbReference type="GO" id="GO:0010181">
    <property type="term" value="F:FMN binding"/>
    <property type="evidence" value="ECO:0007669"/>
    <property type="project" value="InterPro"/>
</dbReference>
<dbReference type="GO" id="GO:0042602">
    <property type="term" value="F:riboflavin reductase (NADPH) activity"/>
    <property type="evidence" value="ECO:0007669"/>
    <property type="project" value="TreeGrafter"/>
</dbReference>
<dbReference type="GO" id="GO:0042207">
    <property type="term" value="P:styrene catabolic process"/>
    <property type="evidence" value="ECO:0000314"/>
    <property type="project" value="UniProtKB"/>
</dbReference>
<dbReference type="Gene3D" id="2.30.110.10">
    <property type="entry name" value="Electron Transport, Fmn-binding Protein, Chain A"/>
    <property type="match status" value="1"/>
</dbReference>
<dbReference type="InterPro" id="IPR002563">
    <property type="entry name" value="Flavin_Rdtase-like_dom"/>
</dbReference>
<dbReference type="InterPro" id="IPR050268">
    <property type="entry name" value="NADH-dep_flavin_reductase"/>
</dbReference>
<dbReference type="InterPro" id="IPR012349">
    <property type="entry name" value="Split_barrel_FMN-bd"/>
</dbReference>
<dbReference type="InterPro" id="IPR054802">
    <property type="entry name" value="StyMonoxStyB"/>
</dbReference>
<dbReference type="NCBIfam" id="NF045733">
    <property type="entry name" value="StyMonoxStyB"/>
    <property type="match status" value="1"/>
</dbReference>
<dbReference type="PANTHER" id="PTHR30466">
    <property type="entry name" value="FLAVIN REDUCTASE"/>
    <property type="match status" value="1"/>
</dbReference>
<dbReference type="PANTHER" id="PTHR30466:SF1">
    <property type="entry name" value="FMN REDUCTASE (NADH) RUTF"/>
    <property type="match status" value="1"/>
</dbReference>
<dbReference type="Pfam" id="PF01613">
    <property type="entry name" value="Flavin_Reduct"/>
    <property type="match status" value="1"/>
</dbReference>
<dbReference type="SMART" id="SM00903">
    <property type="entry name" value="Flavin_Reduct"/>
    <property type="match status" value="1"/>
</dbReference>
<dbReference type="SUPFAM" id="SSF50475">
    <property type="entry name" value="FMN-binding split barrel"/>
    <property type="match status" value="1"/>
</dbReference>
<protein>
    <recommendedName>
        <fullName>NADH-dependent flavin reductase StyB</fullName>
        <ecNumber evidence="4">1.5.1.36</ecNumber>
    </recommendedName>
    <alternativeName>
        <fullName>Styrene monooxygenase small component</fullName>
    </alternativeName>
</protein>
<name>STYB_PSEFL</name>
<gene>
    <name type="primary">styB</name>
</gene>
<evidence type="ECO:0000250" key="1"/>
<evidence type="ECO:0000269" key="2">
    <source>
    </source>
</evidence>
<evidence type="ECO:0000305" key="3"/>
<evidence type="ECO:0000305" key="4">
    <source>
    </source>
</evidence>
<accession>O06835</accession>